<protein>
    <recommendedName>
        <fullName evidence="1">Proteasome subunit alpha</fullName>
    </recommendedName>
    <alternativeName>
        <fullName evidence="1">20S proteasome alpha subunit</fullName>
    </alternativeName>
    <alternativeName>
        <fullName evidence="1">Proteasome core protein PrcA</fullName>
    </alternativeName>
</protein>
<sequence length="248" mass="26723">MSFPYFISPEQAMRERSELARKGIARAKSVVALAYAGGVLFVAENPSRSLQKISELYDRVGFAAAGKFNEFDNLRRGGIQFADTRGYAYDRRDVTGRQLANVYAQTLGTIFTEQAKPYEVELCVAEVAHYGETKPPELYRITYDGSIADEPHFVVMGGTTEPIANALKESYAENASLTDALGIAVAALRAGSADTSGGDQPTLGVASLEVAVLDANRPRRAFRRITGSALQALLVDQESPQSDGESSG</sequence>
<keyword id="KW-0963">Cytoplasm</keyword>
<keyword id="KW-0647">Proteasome</keyword>
<keyword id="KW-1185">Reference proteome</keyword>
<feature type="chain" id="PRO_0000397147" description="Proteasome subunit alpha">
    <location>
        <begin position="1"/>
        <end position="248"/>
    </location>
</feature>
<comment type="function">
    <text evidence="1">Component of the proteasome core, a large protease complex with broad specificity involved in protein degradation.</text>
</comment>
<comment type="activity regulation">
    <text evidence="1">The formation of the proteasomal ATPase ARC-20S proteasome complex, likely via the docking of the C-termini of ARC into the intersubunit pockets in the alpha-rings, may trigger opening of the gate for substrate entry. Interconversion between the open-gate and close-gate conformations leads to a dynamic regulation of the 20S proteasome proteolysis activity.</text>
</comment>
<comment type="pathway">
    <text evidence="1">Protein degradation; proteasomal Pup-dependent pathway.</text>
</comment>
<comment type="subunit">
    <text evidence="1">The 20S proteasome core is composed of 14 alpha and 14 beta subunits that assemble into four stacked heptameric rings, resulting in a barrel-shaped structure. The two inner rings, each composed of seven catalytic beta subunits, are sandwiched by two outer rings, each composed of seven alpha subunits. The catalytic chamber with the active sites is on the inside of the barrel. Has a gated structure, the ends of the cylinder being occluded by the N-termini of the alpha-subunits. Is capped by the proteasome-associated ATPase, ARC.</text>
</comment>
<comment type="subcellular location">
    <subcellularLocation>
        <location evidence="1">Cytoplasm</location>
    </subcellularLocation>
</comment>
<comment type="similarity">
    <text evidence="1">Belongs to the peptidase T1A family.</text>
</comment>
<gene>
    <name evidence="1" type="primary">prcA</name>
    <name type="ordered locus">BQ2027_MB2133C</name>
</gene>
<dbReference type="EMBL" id="LT708304">
    <property type="protein sequence ID" value="SIU00740.1"/>
    <property type="molecule type" value="Genomic_DNA"/>
</dbReference>
<dbReference type="RefSeq" id="NP_855782.1">
    <property type="nucleotide sequence ID" value="NC_002945.3"/>
</dbReference>
<dbReference type="RefSeq" id="WP_003901330.1">
    <property type="nucleotide sequence ID" value="NC_002945.4"/>
</dbReference>
<dbReference type="SMR" id="Q7TZ14"/>
<dbReference type="GeneID" id="45426084"/>
<dbReference type="KEGG" id="mbo:BQ2027_MB2133C"/>
<dbReference type="PATRIC" id="fig|233413.5.peg.2346"/>
<dbReference type="UniPathway" id="UPA00997"/>
<dbReference type="Proteomes" id="UP000001419">
    <property type="component" value="Chromosome"/>
</dbReference>
<dbReference type="GO" id="GO:0005737">
    <property type="term" value="C:cytoplasm"/>
    <property type="evidence" value="ECO:0007669"/>
    <property type="project" value="UniProtKB-SubCell"/>
</dbReference>
<dbReference type="GO" id="GO:0019773">
    <property type="term" value="C:proteasome core complex, alpha-subunit complex"/>
    <property type="evidence" value="ECO:0007669"/>
    <property type="project" value="UniProtKB-UniRule"/>
</dbReference>
<dbReference type="GO" id="GO:0004298">
    <property type="term" value="F:threonine-type endopeptidase activity"/>
    <property type="evidence" value="ECO:0007669"/>
    <property type="project" value="InterPro"/>
</dbReference>
<dbReference type="GO" id="GO:0019941">
    <property type="term" value="P:modification-dependent protein catabolic process"/>
    <property type="evidence" value="ECO:0007669"/>
    <property type="project" value="UniProtKB-UniRule"/>
</dbReference>
<dbReference type="GO" id="GO:0010498">
    <property type="term" value="P:proteasomal protein catabolic process"/>
    <property type="evidence" value="ECO:0007669"/>
    <property type="project" value="UniProtKB-UniRule"/>
</dbReference>
<dbReference type="CDD" id="cd01906">
    <property type="entry name" value="proteasome_protease_HslV"/>
    <property type="match status" value="1"/>
</dbReference>
<dbReference type="FunFam" id="3.60.20.10:FF:000023">
    <property type="entry name" value="Proteasome subunit alpha"/>
    <property type="match status" value="1"/>
</dbReference>
<dbReference type="Gene3D" id="3.60.20.10">
    <property type="entry name" value="Glutamine Phosphoribosylpyrophosphate, subunit 1, domain 1"/>
    <property type="match status" value="1"/>
</dbReference>
<dbReference type="HAMAP" id="MF_00289_B">
    <property type="entry name" value="Proteasome_A_B"/>
    <property type="match status" value="1"/>
</dbReference>
<dbReference type="InterPro" id="IPR029055">
    <property type="entry name" value="Ntn_hydrolases_N"/>
</dbReference>
<dbReference type="InterPro" id="IPR050115">
    <property type="entry name" value="Proteasome_alpha"/>
</dbReference>
<dbReference type="InterPro" id="IPR023332">
    <property type="entry name" value="Proteasome_alpha-type"/>
</dbReference>
<dbReference type="InterPro" id="IPR022296">
    <property type="entry name" value="Proteasome_asu_bac"/>
</dbReference>
<dbReference type="InterPro" id="IPR001353">
    <property type="entry name" value="Proteasome_sua/b"/>
</dbReference>
<dbReference type="NCBIfam" id="TIGR03691">
    <property type="entry name" value="20S_bact_alpha"/>
    <property type="match status" value="1"/>
</dbReference>
<dbReference type="PANTHER" id="PTHR11599">
    <property type="entry name" value="PROTEASOME SUBUNIT ALPHA/BETA"/>
    <property type="match status" value="1"/>
</dbReference>
<dbReference type="Pfam" id="PF00227">
    <property type="entry name" value="Proteasome"/>
    <property type="match status" value="1"/>
</dbReference>
<dbReference type="SUPFAM" id="SSF56235">
    <property type="entry name" value="N-terminal nucleophile aminohydrolases (Ntn hydrolases)"/>
    <property type="match status" value="1"/>
</dbReference>
<dbReference type="PROSITE" id="PS51475">
    <property type="entry name" value="PROTEASOME_ALPHA_2"/>
    <property type="match status" value="1"/>
</dbReference>
<proteinExistence type="inferred from homology"/>
<accession>Q7TZ14</accession>
<accession>A0A1R3Y098</accession>
<accession>X2BK34</accession>
<evidence type="ECO:0000255" key="1">
    <source>
        <dbReference type="HAMAP-Rule" id="MF_00289"/>
    </source>
</evidence>
<organism>
    <name type="scientific">Mycobacterium bovis (strain ATCC BAA-935 / AF2122/97)</name>
    <dbReference type="NCBI Taxonomy" id="233413"/>
    <lineage>
        <taxon>Bacteria</taxon>
        <taxon>Bacillati</taxon>
        <taxon>Actinomycetota</taxon>
        <taxon>Actinomycetes</taxon>
        <taxon>Mycobacteriales</taxon>
        <taxon>Mycobacteriaceae</taxon>
        <taxon>Mycobacterium</taxon>
        <taxon>Mycobacterium tuberculosis complex</taxon>
    </lineage>
</organism>
<name>PSA_MYCBO</name>
<reference key="1">
    <citation type="journal article" date="2003" name="Proc. Natl. Acad. Sci. U.S.A.">
        <title>The complete genome sequence of Mycobacterium bovis.</title>
        <authorList>
            <person name="Garnier T."/>
            <person name="Eiglmeier K."/>
            <person name="Camus J.-C."/>
            <person name="Medina N."/>
            <person name="Mansoor H."/>
            <person name="Pryor M."/>
            <person name="Duthoy S."/>
            <person name="Grondin S."/>
            <person name="Lacroix C."/>
            <person name="Monsempe C."/>
            <person name="Simon S."/>
            <person name="Harris B."/>
            <person name="Atkin R."/>
            <person name="Doggett J."/>
            <person name="Mayes R."/>
            <person name="Keating L."/>
            <person name="Wheeler P.R."/>
            <person name="Parkhill J."/>
            <person name="Barrell B.G."/>
            <person name="Cole S.T."/>
            <person name="Gordon S.V."/>
            <person name="Hewinson R.G."/>
        </authorList>
    </citation>
    <scope>NUCLEOTIDE SEQUENCE [LARGE SCALE GENOMIC DNA]</scope>
    <source>
        <strain>ATCC BAA-935 / AF2122/97</strain>
    </source>
</reference>
<reference key="2">
    <citation type="journal article" date="2017" name="Genome Announc.">
        <title>Updated reference genome sequence and annotation of Mycobacterium bovis AF2122/97.</title>
        <authorList>
            <person name="Malone K.M."/>
            <person name="Farrell D."/>
            <person name="Stuber T.P."/>
            <person name="Schubert O.T."/>
            <person name="Aebersold R."/>
            <person name="Robbe-Austerman S."/>
            <person name="Gordon S.V."/>
        </authorList>
    </citation>
    <scope>NUCLEOTIDE SEQUENCE [LARGE SCALE GENOMIC DNA]</scope>
    <scope>GENOME REANNOTATION</scope>
    <source>
        <strain>ATCC BAA-935 / AF2122/97</strain>
    </source>
</reference>